<dbReference type="EC" id="2.7.7.-" evidence="2"/>
<dbReference type="EC" id="2.8.1.-" evidence="2"/>
<dbReference type="EMBL" id="CH981524">
    <property type="protein sequence ID" value="EDK42220.1"/>
    <property type="molecule type" value="Genomic_DNA"/>
</dbReference>
<dbReference type="RefSeq" id="XP_001527878.1">
    <property type="nucleotide sequence ID" value="XM_001527828.1"/>
</dbReference>
<dbReference type="SMR" id="A5DSR2"/>
<dbReference type="FunCoup" id="A5DSR2">
    <property type="interactions" value="821"/>
</dbReference>
<dbReference type="STRING" id="379508.A5DSR2"/>
<dbReference type="GeneID" id="5234682"/>
<dbReference type="KEGG" id="lel:PVL30_000389"/>
<dbReference type="VEuPathDB" id="FungiDB:LELG_00398"/>
<dbReference type="eggNOG" id="KOG2017">
    <property type="taxonomic scope" value="Eukaryota"/>
</dbReference>
<dbReference type="HOGENOM" id="CLU_013325_1_2_1"/>
<dbReference type="InParanoid" id="A5DSR2"/>
<dbReference type="OMA" id="IPDVGMD"/>
<dbReference type="OrthoDB" id="10261062at2759"/>
<dbReference type="UniPathway" id="UPA00988"/>
<dbReference type="Proteomes" id="UP000001996">
    <property type="component" value="Unassembled WGS sequence"/>
</dbReference>
<dbReference type="GO" id="GO:0005829">
    <property type="term" value="C:cytosol"/>
    <property type="evidence" value="ECO:0007669"/>
    <property type="project" value="InterPro"/>
</dbReference>
<dbReference type="GO" id="GO:0070566">
    <property type="term" value="F:adenylyltransferase activity"/>
    <property type="evidence" value="ECO:0007669"/>
    <property type="project" value="InterPro"/>
</dbReference>
<dbReference type="GO" id="GO:0005524">
    <property type="term" value="F:ATP binding"/>
    <property type="evidence" value="ECO:0007669"/>
    <property type="project" value="UniProtKB-KW"/>
</dbReference>
<dbReference type="GO" id="GO:0046872">
    <property type="term" value="F:metal ion binding"/>
    <property type="evidence" value="ECO:0007669"/>
    <property type="project" value="UniProtKB-KW"/>
</dbReference>
<dbReference type="GO" id="GO:0004792">
    <property type="term" value="F:thiosulfate-cyanide sulfurtransferase activity"/>
    <property type="evidence" value="ECO:0007669"/>
    <property type="project" value="TreeGrafter"/>
</dbReference>
<dbReference type="GO" id="GO:0042292">
    <property type="term" value="F:URM1 activating enzyme activity"/>
    <property type="evidence" value="ECO:0007669"/>
    <property type="project" value="TreeGrafter"/>
</dbReference>
<dbReference type="GO" id="GO:0032447">
    <property type="term" value="P:protein urmylation"/>
    <property type="evidence" value="ECO:0007669"/>
    <property type="project" value="UniProtKB-UniRule"/>
</dbReference>
<dbReference type="GO" id="GO:0002143">
    <property type="term" value="P:tRNA wobble position uridine thiolation"/>
    <property type="evidence" value="ECO:0007669"/>
    <property type="project" value="InterPro"/>
</dbReference>
<dbReference type="CDD" id="cd00757">
    <property type="entry name" value="ThiF_MoeB_HesA_family"/>
    <property type="match status" value="1"/>
</dbReference>
<dbReference type="FunFam" id="3.40.50.720:FF:000033">
    <property type="entry name" value="Adenylyltransferase and sulfurtransferase MOCS3"/>
    <property type="match status" value="1"/>
</dbReference>
<dbReference type="Gene3D" id="3.40.50.720">
    <property type="entry name" value="NAD(P)-binding Rossmann-like Domain"/>
    <property type="match status" value="1"/>
</dbReference>
<dbReference type="Gene3D" id="3.40.250.10">
    <property type="entry name" value="Rhodanese-like domain"/>
    <property type="match status" value="1"/>
</dbReference>
<dbReference type="HAMAP" id="MF_03049">
    <property type="entry name" value="MOCS3_Uba4"/>
    <property type="match status" value="1"/>
</dbReference>
<dbReference type="InterPro" id="IPR028885">
    <property type="entry name" value="MOCS3/Uba4"/>
</dbReference>
<dbReference type="InterPro" id="IPR001763">
    <property type="entry name" value="Rhodanese-like_dom"/>
</dbReference>
<dbReference type="InterPro" id="IPR036873">
    <property type="entry name" value="Rhodanese-like_dom_sf"/>
</dbReference>
<dbReference type="InterPro" id="IPR045886">
    <property type="entry name" value="ThiF/MoeB/HesA"/>
</dbReference>
<dbReference type="InterPro" id="IPR000594">
    <property type="entry name" value="ThiF_NAD_FAD-bd"/>
</dbReference>
<dbReference type="InterPro" id="IPR035985">
    <property type="entry name" value="Ubiquitin-activating_enz"/>
</dbReference>
<dbReference type="PANTHER" id="PTHR10953:SF102">
    <property type="entry name" value="ADENYLYLTRANSFERASE AND SULFURTRANSFERASE MOCS3"/>
    <property type="match status" value="1"/>
</dbReference>
<dbReference type="PANTHER" id="PTHR10953">
    <property type="entry name" value="UBIQUITIN-ACTIVATING ENZYME E1"/>
    <property type="match status" value="1"/>
</dbReference>
<dbReference type="Pfam" id="PF00581">
    <property type="entry name" value="Rhodanese"/>
    <property type="match status" value="1"/>
</dbReference>
<dbReference type="Pfam" id="PF00899">
    <property type="entry name" value="ThiF"/>
    <property type="match status" value="1"/>
</dbReference>
<dbReference type="SMART" id="SM00450">
    <property type="entry name" value="RHOD"/>
    <property type="match status" value="1"/>
</dbReference>
<dbReference type="SUPFAM" id="SSF69572">
    <property type="entry name" value="Activating enzymes of the ubiquitin-like proteins"/>
    <property type="match status" value="1"/>
</dbReference>
<dbReference type="PROSITE" id="PS50206">
    <property type="entry name" value="RHODANESE_3"/>
    <property type="match status" value="1"/>
</dbReference>
<gene>
    <name evidence="2" type="primary">UBA4</name>
    <name type="ORF">LELG_00398</name>
</gene>
<comment type="function">
    <text evidence="2">Plays a central role in 2-thiolation of mcm(5)S(2)U at tRNA wobble positions of cytosolic tRNA(Lys), tRNA(Glu) and tRNA(Gln). Acts by mediating the C-terminal thiocarboxylation of sulfur carrier URM1. Its N-terminus first activates URM1 as acyl-adenylate (-COAMP), then the persulfide sulfur on the catalytic cysteine is transferred to URM1 to form thiocarboxylation (-COSH) of its C-terminus. The reaction probably involves hydrogen sulfide that is generated from the persulfide intermediate and that acts as a nucleophile towards URM1. Subsequently, a transient disulfide bond is formed. Does not use thiosulfate as sulfur donor; NFS1 probably acting as a sulfur donor for thiocarboxylation reactions. Prior mcm(5) tRNA modification by the elongator complex is required for 2-thiolation. May also be involved in protein urmylation.</text>
</comment>
<comment type="cofactor">
    <cofactor evidence="2">
        <name>Zn(2+)</name>
        <dbReference type="ChEBI" id="CHEBI:29105"/>
    </cofactor>
    <text evidence="2">Binds 1 zinc ion per subunit.</text>
</comment>
<comment type="pathway">
    <text evidence="2">tRNA modification; 5-methoxycarbonylmethyl-2-thiouridine-tRNA biosynthesis.</text>
</comment>
<comment type="subcellular location">
    <subcellularLocation>
        <location evidence="1">Cytoplasm</location>
        <location evidence="1">Cytosol</location>
    </subcellularLocation>
</comment>
<comment type="similarity">
    <text evidence="2">In the N-terminal section; belongs to the HesA/MoeB/ThiF family. UBA4 subfamily.</text>
</comment>
<reference key="1">
    <citation type="journal article" date="2009" name="Nature">
        <title>Evolution of pathogenicity and sexual reproduction in eight Candida genomes.</title>
        <authorList>
            <person name="Butler G."/>
            <person name="Rasmussen M.D."/>
            <person name="Lin M.F."/>
            <person name="Santos M.A.S."/>
            <person name="Sakthikumar S."/>
            <person name="Munro C.A."/>
            <person name="Rheinbay E."/>
            <person name="Grabherr M."/>
            <person name="Forche A."/>
            <person name="Reedy J.L."/>
            <person name="Agrafioti I."/>
            <person name="Arnaud M.B."/>
            <person name="Bates S."/>
            <person name="Brown A.J.P."/>
            <person name="Brunke S."/>
            <person name="Costanzo M.C."/>
            <person name="Fitzpatrick D.A."/>
            <person name="de Groot P.W.J."/>
            <person name="Harris D."/>
            <person name="Hoyer L.L."/>
            <person name="Hube B."/>
            <person name="Klis F.M."/>
            <person name="Kodira C."/>
            <person name="Lennard N."/>
            <person name="Logue M.E."/>
            <person name="Martin R."/>
            <person name="Neiman A.M."/>
            <person name="Nikolaou E."/>
            <person name="Quail M.A."/>
            <person name="Quinn J."/>
            <person name="Santos M.C."/>
            <person name="Schmitzberger F.F."/>
            <person name="Sherlock G."/>
            <person name="Shah P."/>
            <person name="Silverstein K.A.T."/>
            <person name="Skrzypek M.S."/>
            <person name="Soll D."/>
            <person name="Staggs R."/>
            <person name="Stansfield I."/>
            <person name="Stumpf M.P.H."/>
            <person name="Sudbery P.E."/>
            <person name="Srikantha T."/>
            <person name="Zeng Q."/>
            <person name="Berman J."/>
            <person name="Berriman M."/>
            <person name="Heitman J."/>
            <person name="Gow N.A.R."/>
            <person name="Lorenz M.C."/>
            <person name="Birren B.W."/>
            <person name="Kellis M."/>
            <person name="Cuomo C.A."/>
        </authorList>
    </citation>
    <scope>NUCLEOTIDE SEQUENCE [LARGE SCALE GENOMIC DNA]</scope>
    <source>
        <strain>ATCC 11503 / BCRC 21390 / CBS 2605 / JCM 1781 / NBRC 1676 / NRRL YB-4239</strain>
    </source>
</reference>
<protein>
    <recommendedName>
        <fullName evidence="2">Adenylyltransferase and sulfurtransferase UBA4</fullName>
    </recommendedName>
    <alternativeName>
        <fullName evidence="2">Ubiquitin-like protein activator 4</fullName>
    </alternativeName>
    <domain>
        <recommendedName>
            <fullName evidence="2">Adenylyltransferase UBA4</fullName>
            <ecNumber evidence="2">2.7.7.-</ecNumber>
        </recommendedName>
    </domain>
    <domain>
        <recommendedName>
            <fullName evidence="2">Sulfurtransferase UBA4</fullName>
            <ecNumber evidence="2">2.8.1.-</ecNumber>
        </recommendedName>
    </domain>
</protein>
<organism>
    <name type="scientific">Lodderomyces elongisporus (strain ATCC 11503 / CBS 2605 / JCM 1781 / NBRC 1676 / NRRL YB-4239)</name>
    <name type="common">Yeast</name>
    <name type="synonym">Saccharomyces elongisporus</name>
    <dbReference type="NCBI Taxonomy" id="379508"/>
    <lineage>
        <taxon>Eukaryota</taxon>
        <taxon>Fungi</taxon>
        <taxon>Dikarya</taxon>
        <taxon>Ascomycota</taxon>
        <taxon>Saccharomycotina</taxon>
        <taxon>Pichiomycetes</taxon>
        <taxon>Debaryomycetaceae</taxon>
        <taxon>Candida/Lodderomyces clade</taxon>
        <taxon>Lodderomyces</taxon>
    </lineage>
</organism>
<keyword id="KW-0067">ATP-binding</keyword>
<keyword id="KW-0963">Cytoplasm</keyword>
<keyword id="KW-0479">Metal-binding</keyword>
<keyword id="KW-0511">Multifunctional enzyme</keyword>
<keyword id="KW-0547">Nucleotide-binding</keyword>
<keyword id="KW-0548">Nucleotidyltransferase</keyword>
<keyword id="KW-1185">Reference proteome</keyword>
<keyword id="KW-0808">Transferase</keyword>
<keyword id="KW-0819">tRNA processing</keyword>
<keyword id="KW-0833">Ubl conjugation pathway</keyword>
<keyword id="KW-0862">Zinc</keyword>
<name>UBA4_LODEL</name>
<sequence length="455" mass="50728">MTDLSKEELLQRIQQLENENEQLKAVALQSLHTLRYNQSCSHSLQQSNSVNEEPLSLEEFKRYGRQMIVPKFGSLNAQKKLRSSKILVVGAGGLGSPALQYLCAAGIGEIGIIDDDTVDVSNLHRQIIHKSSLVGILKCESAKQSMKDLNPFVKVETYPERLTVFNAFEIIDKYDLVLDCTDHPAVRYLINDVCVLLGKTIVSGSGLRAEGQLTILNYDQVGPCYRCFYPQAPEPSSITSCSDGGVIGPAIGLVGVAMAMETIKLLTGTYTRENFTPFLASYSAYPLQQMKTFKMRPKQSSCKVCGDRPEITKEMVENGSIDYVSFCGHIDEKNPPLQKKYRITVQEYSSLLNSQSREHTLIDVRPKEQFEITNLPGSINLDWPLVFSKCDNDKIDLLLPQDITKADQLYVICRFGNDSQLATAKLIEAGYLNAKDIIGGLNKWSEDIDAAFPKY</sequence>
<proteinExistence type="inferred from homology"/>
<evidence type="ECO:0000250" key="1">
    <source>
        <dbReference type="UniProtKB" id="P38820"/>
    </source>
</evidence>
<evidence type="ECO:0000255" key="2">
    <source>
        <dbReference type="HAMAP-Rule" id="MF_03049"/>
    </source>
</evidence>
<accession>A5DSR2</accession>
<feature type="chain" id="PRO_0000369228" description="Adenylyltransferase and sulfurtransferase UBA4">
    <location>
        <begin position="1"/>
        <end position="455"/>
    </location>
</feature>
<feature type="domain" description="Rhodanese" evidence="2">
    <location>
        <begin position="355"/>
        <end position="453"/>
    </location>
</feature>
<feature type="active site" description="Glycyl thioester intermediate; for adenylyltransferase activity" evidence="2">
    <location>
        <position position="241"/>
    </location>
</feature>
<feature type="active site" description="Cysteine persulfide intermediate; for sulfurtransferase activity" evidence="2">
    <location>
        <position position="413"/>
    </location>
</feature>
<feature type="binding site" evidence="2">
    <location>
        <position position="93"/>
    </location>
    <ligand>
        <name>ATP</name>
        <dbReference type="ChEBI" id="CHEBI:30616"/>
    </ligand>
</feature>
<feature type="binding site" evidence="2">
    <location>
        <position position="114"/>
    </location>
    <ligand>
        <name>ATP</name>
        <dbReference type="ChEBI" id="CHEBI:30616"/>
    </ligand>
</feature>
<feature type="binding site" evidence="2">
    <location>
        <begin position="121"/>
        <end position="125"/>
    </location>
    <ligand>
        <name>ATP</name>
        <dbReference type="ChEBI" id="CHEBI:30616"/>
    </ligand>
</feature>
<feature type="binding site" evidence="2">
    <location>
        <position position="138"/>
    </location>
    <ligand>
        <name>ATP</name>
        <dbReference type="ChEBI" id="CHEBI:30616"/>
    </ligand>
</feature>
<feature type="binding site" evidence="2">
    <location>
        <begin position="182"/>
        <end position="183"/>
    </location>
    <ligand>
        <name>ATP</name>
        <dbReference type="ChEBI" id="CHEBI:30616"/>
    </ligand>
</feature>
<feature type="binding site" evidence="2">
    <location>
        <position position="224"/>
    </location>
    <ligand>
        <name>Zn(2+)</name>
        <dbReference type="ChEBI" id="CHEBI:29105"/>
    </ligand>
</feature>
<feature type="binding site" evidence="2">
    <location>
        <position position="227"/>
    </location>
    <ligand>
        <name>Zn(2+)</name>
        <dbReference type="ChEBI" id="CHEBI:29105"/>
    </ligand>
</feature>
<feature type="binding site" evidence="2">
    <location>
        <position position="302"/>
    </location>
    <ligand>
        <name>Zn(2+)</name>
        <dbReference type="ChEBI" id="CHEBI:29105"/>
    </ligand>
</feature>
<feature type="binding site" evidence="2">
    <location>
        <position position="305"/>
    </location>
    <ligand>
        <name>Zn(2+)</name>
        <dbReference type="ChEBI" id="CHEBI:29105"/>
    </ligand>
</feature>